<feature type="signal peptide" evidence="1">
    <location>
        <begin position="1"/>
        <end position="24"/>
    </location>
</feature>
<feature type="chain" id="PRO_0000018913" description="Patr class I histocompatibility antigen, A-126 alpha chain">
    <location>
        <begin position="25"/>
        <end position="365"/>
    </location>
</feature>
<feature type="topological domain" description="Extracellular" evidence="3">
    <location>
        <begin position="25"/>
        <end position="308"/>
    </location>
</feature>
<feature type="transmembrane region" description="Helical" evidence="3">
    <location>
        <begin position="309"/>
        <end position="332"/>
    </location>
</feature>
<feature type="topological domain" description="Cytoplasmic" evidence="3">
    <location>
        <begin position="333"/>
        <end position="365"/>
    </location>
</feature>
<feature type="domain" description="Ig-like C1-type">
    <location>
        <begin position="209"/>
        <end position="295"/>
    </location>
</feature>
<feature type="region of interest" description="Alpha-1">
    <location>
        <begin position="25"/>
        <end position="114"/>
    </location>
</feature>
<feature type="region of interest" description="Alpha-2">
    <location>
        <begin position="115"/>
        <end position="206"/>
    </location>
</feature>
<feature type="region of interest" description="Alpha-3">
    <location>
        <begin position="207"/>
        <end position="298"/>
    </location>
</feature>
<feature type="region of interest" description="Connecting peptide">
    <location>
        <begin position="299"/>
        <end position="308"/>
    </location>
</feature>
<feature type="region of interest" description="Disordered" evidence="5">
    <location>
        <begin position="338"/>
        <end position="365"/>
    </location>
</feature>
<feature type="compositionally biased region" description="Low complexity" evidence="5">
    <location>
        <begin position="342"/>
        <end position="359"/>
    </location>
</feature>
<feature type="modified residue" description="Phosphoserine" evidence="2">
    <location>
        <position position="343"/>
    </location>
</feature>
<feature type="modified residue" description="Phosphotyrosine" evidence="2">
    <location>
        <position position="344"/>
    </location>
</feature>
<feature type="modified residue" description="Phosphoserine" evidence="2">
    <location>
        <position position="345"/>
    </location>
</feature>
<feature type="modified residue" description="Phosphoserine" evidence="2">
    <location>
        <position position="349"/>
    </location>
</feature>
<feature type="modified residue" description="Phosphoserine" evidence="2">
    <location>
        <position position="352"/>
    </location>
</feature>
<feature type="modified residue" description="Phosphoserine" evidence="2">
    <location>
        <position position="356"/>
    </location>
</feature>
<feature type="modified residue" description="Phosphoserine" evidence="2">
    <location>
        <position position="359"/>
    </location>
</feature>
<feature type="glycosylation site" description="N-linked (GlcNAc...) asparagine" evidence="1">
    <location>
        <position position="110"/>
    </location>
</feature>
<feature type="disulfide bond" evidence="4">
    <location>
        <begin position="125"/>
        <end position="188"/>
    </location>
</feature>
<feature type="disulfide bond" evidence="4">
    <location>
        <begin position="227"/>
        <end position="283"/>
    </location>
</feature>
<accession>P13749</accession>
<accession>Q7JJU4</accession>
<name>1A04_PANTR</name>
<reference key="1">
    <citation type="journal article" date="1988" name="EMBO J.">
        <title>Nucleotide sequences of chimpanzee MHC class I alleles: evidence for trans-species mode of evolution.</title>
        <authorList>
            <person name="Mayer W.E."/>
            <person name="Jonker M."/>
            <person name="Klein D."/>
            <person name="Ivanyi P."/>
            <person name="van Seventer G."/>
            <person name="Klein J."/>
        </authorList>
    </citation>
    <scope>NUCLEOTIDE SEQUENCE [MRNA]</scope>
</reference>
<reference key="2">
    <citation type="journal article" date="2000" name="Immunogenetics">
        <title>Major histocompatibility complex class I diversity in a West African chimpanzee population: implications for HIV research.</title>
        <authorList>
            <person name="de Groot N.G."/>
            <person name="Otting N."/>
            <person name="Arguello R."/>
            <person name="Watkins D.I."/>
            <person name="Doxiadis G.G."/>
            <person name="Madrigal J.A."/>
            <person name="Bontrop R.E."/>
        </authorList>
    </citation>
    <scope>NUCLEOTIDE SEQUENCE [MRNA]</scope>
    <source>
        <tissue>Blood</tissue>
    </source>
</reference>
<reference key="3">
    <citation type="journal article" date="2003" name="Proc. Natl. Acad. Sci. U.S.A.">
        <title>Comparative sequencing of human and chimpanzee MHC class I regions unveils insertions/deletions as the major path to genomic divergence.</title>
        <authorList>
            <person name="Anzai T."/>
            <person name="Shiina T."/>
            <person name="Kimura N."/>
            <person name="Yanagiya K."/>
            <person name="Kohara S."/>
            <person name="Shigenari A."/>
            <person name="Yamagata T."/>
            <person name="Kulski J.K."/>
            <person name="Naruse T.K."/>
            <person name="Fujimori Y."/>
            <person name="Fukuzumi Y."/>
            <person name="Yamazaki M."/>
            <person name="Tashiro H."/>
            <person name="Iwamoto C."/>
            <person name="Umehara Y."/>
            <person name="Imanishi T."/>
            <person name="Meyer A."/>
            <person name="Ikeo K."/>
            <person name="Gojobori T."/>
            <person name="Bahram S."/>
            <person name="Inoko H."/>
        </authorList>
    </citation>
    <scope>NUCLEOTIDE SEQUENCE [LARGE SCALE GENOMIC DNA]</scope>
</reference>
<keyword id="KW-1015">Disulfide bond</keyword>
<keyword id="KW-0325">Glycoprotein</keyword>
<keyword id="KW-0391">Immunity</keyword>
<keyword id="KW-0472">Membrane</keyword>
<keyword id="KW-0490">MHC I</keyword>
<keyword id="KW-0597">Phosphoprotein</keyword>
<keyword id="KW-1185">Reference proteome</keyword>
<keyword id="KW-0732">Signal</keyword>
<keyword id="KW-0812">Transmembrane</keyword>
<keyword id="KW-1133">Transmembrane helix</keyword>
<sequence length="365" mass="40656">MAVMAPRTLVLLLSGALALTQTWAGSHSMRYFSTSVSRPGRGEPRFIAVGYVDDTQFVRFDSDAASQRMEPRAPWIEQEGPEYWDEETRSVKASAQTDRVDLGTLRGYYNQSEDGSHTIQLMFGCDVGSDGRFLRGYRQDAYDGKDYIALNEDLRSWTAADMAAQITQRKWEAAHAAEQLRAYLEGTCVEWLRRYLENGKETLQRTDPPKTHMTHHPISDREATLRCWALGFYPAEITLTWQRDGEDQTQDTELVETRPAGDGTFQKWAAVVVPSGEEQRYTCHVQHEGLPKPLTLRWEPSSQPTIPIVGIIAGLVLLGAVITGAVVAAVMWRRKSSDRKGGSYSQAASSDSAQGSDVSLTACKV</sequence>
<evidence type="ECO:0000250" key="1"/>
<evidence type="ECO:0000250" key="2">
    <source>
        <dbReference type="UniProtKB" id="P10314"/>
    </source>
</evidence>
<evidence type="ECO:0000255" key="3"/>
<evidence type="ECO:0000255" key="4">
    <source>
        <dbReference type="PROSITE-ProRule" id="PRU00114"/>
    </source>
</evidence>
<evidence type="ECO:0000256" key="5">
    <source>
        <dbReference type="SAM" id="MobiDB-lite"/>
    </source>
</evidence>
<evidence type="ECO:0000305" key="6"/>
<comment type="function">
    <text>Involved in the presentation of foreign antigens to the immune system.</text>
</comment>
<comment type="subunit">
    <text>Heterodimer of an alpha chain and a beta chain (beta-2-microglobulin).</text>
</comment>
<comment type="subcellular location">
    <subcellularLocation>
        <location>Membrane</location>
        <topology>Single-pass type I membrane protein</topology>
    </subcellularLocation>
</comment>
<comment type="similarity">
    <text evidence="6">Belongs to the MHC class I family.</text>
</comment>
<gene>
    <name type="primary">Patr-A</name>
</gene>
<dbReference type="EMBL" id="X13114">
    <property type="protein sequence ID" value="CAA31506.1"/>
    <property type="molecule type" value="mRNA"/>
</dbReference>
<dbReference type="EMBL" id="AF168401">
    <property type="protein sequence ID" value="AAF72782.1"/>
    <property type="molecule type" value="mRNA"/>
</dbReference>
<dbReference type="EMBL" id="BA000041">
    <property type="protein sequence ID" value="BAC78189.1"/>
    <property type="molecule type" value="Genomic_DNA"/>
</dbReference>
<dbReference type="PIR" id="S01171">
    <property type="entry name" value="S01171"/>
</dbReference>
<dbReference type="SMR" id="P13749"/>
<dbReference type="GlyCosmos" id="P13749">
    <property type="glycosylation" value="1 site, No reported glycans"/>
</dbReference>
<dbReference type="PaxDb" id="9598-ENSPTRP00000056399"/>
<dbReference type="eggNOG" id="ENOG502RQEK">
    <property type="taxonomic scope" value="Eukaryota"/>
</dbReference>
<dbReference type="InParanoid" id="P13749"/>
<dbReference type="Proteomes" id="UP000002277">
    <property type="component" value="Unplaced"/>
</dbReference>
<dbReference type="GO" id="GO:0009986">
    <property type="term" value="C:cell surface"/>
    <property type="evidence" value="ECO:0007669"/>
    <property type="project" value="UniProtKB-ARBA"/>
</dbReference>
<dbReference type="GO" id="GO:0031901">
    <property type="term" value="C:early endosome membrane"/>
    <property type="evidence" value="ECO:0007669"/>
    <property type="project" value="UniProtKB-ARBA"/>
</dbReference>
<dbReference type="GO" id="GO:0012507">
    <property type="term" value="C:ER to Golgi transport vesicle membrane"/>
    <property type="evidence" value="ECO:0007669"/>
    <property type="project" value="UniProtKB-ARBA"/>
</dbReference>
<dbReference type="GO" id="GO:0098553">
    <property type="term" value="C:lumenal side of endoplasmic reticulum membrane"/>
    <property type="evidence" value="ECO:0007669"/>
    <property type="project" value="UniProtKB-ARBA"/>
</dbReference>
<dbReference type="GO" id="GO:0042612">
    <property type="term" value="C:MHC class I protein complex"/>
    <property type="evidence" value="ECO:0007669"/>
    <property type="project" value="UniProtKB-KW"/>
</dbReference>
<dbReference type="GO" id="GO:0030670">
    <property type="term" value="C:phagocytic vesicle membrane"/>
    <property type="evidence" value="ECO:0007669"/>
    <property type="project" value="UniProtKB-ARBA"/>
</dbReference>
<dbReference type="GO" id="GO:0055038">
    <property type="term" value="C:recycling endosome membrane"/>
    <property type="evidence" value="ECO:0007669"/>
    <property type="project" value="UniProtKB-ARBA"/>
</dbReference>
<dbReference type="GO" id="GO:0002474">
    <property type="term" value="P:antigen processing and presentation of peptide antigen via MHC class I"/>
    <property type="evidence" value="ECO:0007669"/>
    <property type="project" value="UniProtKB-KW"/>
</dbReference>
<dbReference type="GO" id="GO:0006955">
    <property type="term" value="P:immune response"/>
    <property type="evidence" value="ECO:0007669"/>
    <property type="project" value="InterPro"/>
</dbReference>
<dbReference type="CDD" id="cd21026">
    <property type="entry name" value="IgC1_MHC_Ia_HLA-B"/>
    <property type="match status" value="1"/>
</dbReference>
<dbReference type="FunFam" id="2.60.40.10:FF:000014">
    <property type="entry name" value="H-2 class I histocompatibility antigen, alpha chain"/>
    <property type="match status" value="1"/>
</dbReference>
<dbReference type="FunFam" id="3.30.500.10:FF:000001">
    <property type="entry name" value="H-2 class I histocompatibility antigen, alpha chain"/>
    <property type="match status" value="1"/>
</dbReference>
<dbReference type="Gene3D" id="2.60.40.10">
    <property type="entry name" value="Immunoglobulins"/>
    <property type="match status" value="1"/>
</dbReference>
<dbReference type="Gene3D" id="3.30.500.10">
    <property type="entry name" value="MHC class I-like antigen recognition-like"/>
    <property type="match status" value="1"/>
</dbReference>
<dbReference type="InterPro" id="IPR007110">
    <property type="entry name" value="Ig-like_dom"/>
</dbReference>
<dbReference type="InterPro" id="IPR036179">
    <property type="entry name" value="Ig-like_dom_sf"/>
</dbReference>
<dbReference type="InterPro" id="IPR013783">
    <property type="entry name" value="Ig-like_fold"/>
</dbReference>
<dbReference type="InterPro" id="IPR003006">
    <property type="entry name" value="Ig/MHC_CS"/>
</dbReference>
<dbReference type="InterPro" id="IPR003597">
    <property type="entry name" value="Ig_C1-set"/>
</dbReference>
<dbReference type="InterPro" id="IPR050208">
    <property type="entry name" value="MHC_class-I_related"/>
</dbReference>
<dbReference type="InterPro" id="IPR011161">
    <property type="entry name" value="MHC_I-like_Ag-recog"/>
</dbReference>
<dbReference type="InterPro" id="IPR037055">
    <property type="entry name" value="MHC_I-like_Ag-recog_sf"/>
</dbReference>
<dbReference type="InterPro" id="IPR011162">
    <property type="entry name" value="MHC_I/II-like_Ag-recog"/>
</dbReference>
<dbReference type="InterPro" id="IPR001039">
    <property type="entry name" value="MHC_I_a_a1/a2"/>
</dbReference>
<dbReference type="InterPro" id="IPR010579">
    <property type="entry name" value="MHC_I_a_C"/>
</dbReference>
<dbReference type="PANTHER" id="PTHR16675:SF229">
    <property type="entry name" value="HLA CLASS I HISTOCOMPATIBILITY ANTIGEN, A ALPHA CHAIN"/>
    <property type="match status" value="1"/>
</dbReference>
<dbReference type="PANTHER" id="PTHR16675">
    <property type="entry name" value="MHC CLASS I-RELATED"/>
    <property type="match status" value="1"/>
</dbReference>
<dbReference type="Pfam" id="PF07654">
    <property type="entry name" value="C1-set"/>
    <property type="match status" value="1"/>
</dbReference>
<dbReference type="Pfam" id="PF00129">
    <property type="entry name" value="MHC_I"/>
    <property type="match status" value="1"/>
</dbReference>
<dbReference type="Pfam" id="PF06623">
    <property type="entry name" value="MHC_I_C"/>
    <property type="match status" value="1"/>
</dbReference>
<dbReference type="PRINTS" id="PR01638">
    <property type="entry name" value="MHCCLASSI"/>
</dbReference>
<dbReference type="SMART" id="SM00407">
    <property type="entry name" value="IGc1"/>
    <property type="match status" value="1"/>
</dbReference>
<dbReference type="SUPFAM" id="SSF48726">
    <property type="entry name" value="Immunoglobulin"/>
    <property type="match status" value="1"/>
</dbReference>
<dbReference type="SUPFAM" id="SSF54452">
    <property type="entry name" value="MHC antigen-recognition domain"/>
    <property type="match status" value="1"/>
</dbReference>
<dbReference type="PROSITE" id="PS50835">
    <property type="entry name" value="IG_LIKE"/>
    <property type="match status" value="1"/>
</dbReference>
<dbReference type="PROSITE" id="PS00290">
    <property type="entry name" value="IG_MHC"/>
    <property type="match status" value="1"/>
</dbReference>
<organism>
    <name type="scientific">Pan troglodytes</name>
    <name type="common">Chimpanzee</name>
    <dbReference type="NCBI Taxonomy" id="9598"/>
    <lineage>
        <taxon>Eukaryota</taxon>
        <taxon>Metazoa</taxon>
        <taxon>Chordata</taxon>
        <taxon>Craniata</taxon>
        <taxon>Vertebrata</taxon>
        <taxon>Euteleostomi</taxon>
        <taxon>Mammalia</taxon>
        <taxon>Eutheria</taxon>
        <taxon>Euarchontoglires</taxon>
        <taxon>Primates</taxon>
        <taxon>Haplorrhini</taxon>
        <taxon>Catarrhini</taxon>
        <taxon>Hominidae</taxon>
        <taxon>Pan</taxon>
    </lineage>
</organism>
<protein>
    <recommendedName>
        <fullName>Patr class I histocompatibility antigen, A-126 alpha chain</fullName>
    </recommendedName>
    <alternativeName>
        <fullName>ChLa class I histocompatibility antigen, A-126 alpha chain</fullName>
    </alternativeName>
    <alternativeName>
        <fullName>MHC class I antigen Patr-A*0401</fullName>
    </alternativeName>
</protein>
<proteinExistence type="evidence at transcript level"/>